<protein>
    <recommendedName>
        <fullName evidence="2">Cytochrome b6-f complex subunit 4</fullName>
    </recommendedName>
    <alternativeName>
        <fullName evidence="2">17 kDa polypeptide</fullName>
    </alternativeName>
</protein>
<proteinExistence type="inferred from homology"/>
<comment type="function">
    <text evidence="2">Component of the cytochrome b6-f complex, which mediates electron transfer between photosystem II (PSII) and photosystem I (PSI), cyclic electron flow around PSI, and state transitions.</text>
</comment>
<comment type="subunit">
    <text evidence="1">The 4 large subunits of the cytochrome b6-f complex are cytochrome b6, subunit IV (17 kDa polypeptide, petD), cytochrome f and the Rieske protein, while the 4 small subunits are petG, petL, petM and petN. The complex functions as a dimer (By similarity).</text>
</comment>
<comment type="subcellular location">
    <subcellularLocation>
        <location evidence="2">Plastid</location>
        <location evidence="2">Chloroplast thylakoid membrane</location>
        <topology evidence="2">Multi-pass membrane protein</topology>
    </subcellularLocation>
</comment>
<comment type="similarity">
    <text evidence="2">Belongs to the cytochrome b family. PetD subfamily.</text>
</comment>
<name>PETD_SOLTU</name>
<dbReference type="EMBL" id="DQ231562">
    <property type="protein sequence ID" value="ABB90070.1"/>
    <property type="molecule type" value="Genomic_DNA"/>
</dbReference>
<dbReference type="EMBL" id="DQ386163">
    <property type="protein sequence ID" value="ABD47087.1"/>
    <property type="molecule type" value="Genomic_DNA"/>
</dbReference>
<dbReference type="RefSeq" id="YP_635670.1">
    <property type="nucleotide sequence ID" value="NC_008096.2"/>
</dbReference>
<dbReference type="SMR" id="Q2VEE9"/>
<dbReference type="FunCoup" id="Q2VEE9">
    <property type="interactions" value="354"/>
</dbReference>
<dbReference type="STRING" id="4113.Q2VEE9"/>
<dbReference type="GeneID" id="4099875"/>
<dbReference type="KEGG" id="sot:4099875"/>
<dbReference type="InParanoid" id="Q2VEE9"/>
<dbReference type="OrthoDB" id="1246300at2759"/>
<dbReference type="Proteomes" id="UP000011115">
    <property type="component" value="Unassembled WGS sequence"/>
</dbReference>
<dbReference type="GO" id="GO:0009535">
    <property type="term" value="C:chloroplast thylakoid membrane"/>
    <property type="evidence" value="ECO:0007669"/>
    <property type="project" value="UniProtKB-SubCell"/>
</dbReference>
<dbReference type="GO" id="GO:0045158">
    <property type="term" value="F:electron transporter, transferring electrons within cytochrome b6/f complex of photosystem II activity"/>
    <property type="evidence" value="ECO:0007669"/>
    <property type="project" value="UniProtKB-UniRule"/>
</dbReference>
<dbReference type="GO" id="GO:0045156">
    <property type="term" value="F:electron transporter, transferring electrons within the cyclic electron transport pathway of photosynthesis activity"/>
    <property type="evidence" value="ECO:0007669"/>
    <property type="project" value="InterPro"/>
</dbReference>
<dbReference type="GO" id="GO:0016491">
    <property type="term" value="F:oxidoreductase activity"/>
    <property type="evidence" value="ECO:0007669"/>
    <property type="project" value="InterPro"/>
</dbReference>
<dbReference type="GO" id="GO:0009767">
    <property type="term" value="P:photosynthetic electron transport chain"/>
    <property type="evidence" value="ECO:0007669"/>
    <property type="project" value="InterPro"/>
</dbReference>
<dbReference type="CDD" id="cd00290">
    <property type="entry name" value="cytochrome_b_C"/>
    <property type="match status" value="1"/>
</dbReference>
<dbReference type="FunFam" id="1.10.287.980:FF:000001">
    <property type="entry name" value="Cytochrome b6-f complex subunit 4"/>
    <property type="match status" value="1"/>
</dbReference>
<dbReference type="FunFam" id="1.20.5.510:FF:000002">
    <property type="entry name" value="Cytochrome b6-f complex subunit 4"/>
    <property type="match status" value="1"/>
</dbReference>
<dbReference type="Gene3D" id="1.10.287.980">
    <property type="entry name" value="plastocyanin oxidoreductase"/>
    <property type="match status" value="1"/>
</dbReference>
<dbReference type="Gene3D" id="1.20.5.510">
    <property type="entry name" value="Single helix bin"/>
    <property type="match status" value="1"/>
</dbReference>
<dbReference type="HAMAP" id="MF_01344">
    <property type="entry name" value="Cytb6_f_subIV"/>
    <property type="match status" value="1"/>
</dbReference>
<dbReference type="InterPro" id="IPR005798">
    <property type="entry name" value="Cyt_b/b6_C"/>
</dbReference>
<dbReference type="InterPro" id="IPR036150">
    <property type="entry name" value="Cyt_b/b6_C_sf"/>
</dbReference>
<dbReference type="InterPro" id="IPR005870">
    <property type="entry name" value="Cyt_b6/f_cplx_suIV"/>
</dbReference>
<dbReference type="InterPro" id="IPR048260">
    <property type="entry name" value="Cytochrome_b_C_euk/bac"/>
</dbReference>
<dbReference type="NCBIfam" id="TIGR01156">
    <property type="entry name" value="cytb6_f_IV"/>
    <property type="match status" value="1"/>
</dbReference>
<dbReference type="PANTHER" id="PTHR19271">
    <property type="entry name" value="CYTOCHROME B"/>
    <property type="match status" value="1"/>
</dbReference>
<dbReference type="PANTHER" id="PTHR19271:SF40">
    <property type="entry name" value="CYTOCHROME B"/>
    <property type="match status" value="1"/>
</dbReference>
<dbReference type="Pfam" id="PF00032">
    <property type="entry name" value="Cytochrom_B_C"/>
    <property type="match status" value="1"/>
</dbReference>
<dbReference type="PIRSF" id="PIRSF000033">
    <property type="entry name" value="B6f_17K"/>
    <property type="match status" value="1"/>
</dbReference>
<dbReference type="SUPFAM" id="SSF81648">
    <property type="entry name" value="a domain/subunit of cytochrome bc1 complex (Ubiquinol-cytochrome c reductase)"/>
    <property type="match status" value="1"/>
</dbReference>
<dbReference type="PROSITE" id="PS51003">
    <property type="entry name" value="CYTB_CTER"/>
    <property type="match status" value="1"/>
</dbReference>
<gene>
    <name evidence="2" type="primary">petD</name>
</gene>
<geneLocation type="chloroplast"/>
<accession>Q2VEE9</accession>
<accession>Q27S18</accession>
<evidence type="ECO:0000250" key="1"/>
<evidence type="ECO:0000255" key="2">
    <source>
        <dbReference type="HAMAP-Rule" id="MF_01344"/>
    </source>
</evidence>
<evidence type="ECO:0000305" key="3"/>
<organism>
    <name type="scientific">Solanum tuberosum</name>
    <name type="common">Potato</name>
    <dbReference type="NCBI Taxonomy" id="4113"/>
    <lineage>
        <taxon>Eukaryota</taxon>
        <taxon>Viridiplantae</taxon>
        <taxon>Streptophyta</taxon>
        <taxon>Embryophyta</taxon>
        <taxon>Tracheophyta</taxon>
        <taxon>Spermatophyta</taxon>
        <taxon>Magnoliopsida</taxon>
        <taxon>eudicotyledons</taxon>
        <taxon>Gunneridae</taxon>
        <taxon>Pentapetalae</taxon>
        <taxon>asterids</taxon>
        <taxon>lamiids</taxon>
        <taxon>Solanales</taxon>
        <taxon>Solanaceae</taxon>
        <taxon>Solanoideae</taxon>
        <taxon>Solaneae</taxon>
        <taxon>Solanum</taxon>
    </lineage>
</organism>
<keyword id="KW-0150">Chloroplast</keyword>
<keyword id="KW-0249">Electron transport</keyword>
<keyword id="KW-0472">Membrane</keyword>
<keyword id="KW-0602">Photosynthesis</keyword>
<keyword id="KW-0934">Plastid</keyword>
<keyword id="KW-1185">Reference proteome</keyword>
<keyword id="KW-0793">Thylakoid</keyword>
<keyword id="KW-0812">Transmembrane</keyword>
<keyword id="KW-1133">Transmembrane helix</keyword>
<keyword id="KW-0813">Transport</keyword>
<reference key="1">
    <citation type="journal article" date="2006" name="Plant Cell Rep.">
        <title>The complete chloroplast genome sequences of Solanum tuberosum and comparative analysis with Solanaceae species identified the presence of a 241-bp deletion in cultivated potato chloroplast DNA sequence.</title>
        <authorList>
            <person name="Chung H.-J."/>
            <person name="Jung J.D."/>
            <person name="Park H.-W."/>
            <person name="Kim J.-H."/>
            <person name="Cha H.W."/>
            <person name="Min S.R."/>
            <person name="Jeong W.-J."/>
            <person name="Liu J.R."/>
        </authorList>
    </citation>
    <scope>NUCLEOTIDE SEQUENCE [LARGE SCALE GENOMIC DNA]</scope>
    <source>
        <strain>cv. Desiree</strain>
    </source>
</reference>
<reference key="2">
    <citation type="submission" date="2006-02" db="EMBL/GenBank/DDBJ databases">
        <title>Complete chloroplast genome sequences of Solanum tuberosum cultivar Desiree and comparative analyses with other Solanaceae genomes.</title>
        <authorList>
            <person name="Gargano D."/>
            <person name="Scotti N."/>
            <person name="Vezzi A."/>
            <person name="Bilardi A."/>
            <person name="Valle G."/>
            <person name="Grillo S."/>
            <person name="Cardi T."/>
        </authorList>
    </citation>
    <scope>NUCLEOTIDE SEQUENCE [LARGE SCALE GENOMIC DNA]</scope>
    <source>
        <strain>cv. Desiree</strain>
    </source>
</reference>
<sequence>MGVTKKPDLNDPVLRAKLAKGMGHNYYGEPAWPNDLLYIFPVVILGTIACNVGLAVLEPSMIGEPPDPFATPLEILPEWYFFPVFQILRTVPNKLLGVLLMVSVPAGLLTVPFLENVNKFQNPFRRPVATTVFLIGTAVALWLGIGATLPIDKSLTLGLF</sequence>
<feature type="chain" id="PRO_0000061891" description="Cytochrome b6-f complex subunit 4">
    <location>
        <begin position="1"/>
        <end position="160"/>
    </location>
</feature>
<feature type="transmembrane region" description="Helical" evidence="2">
    <location>
        <begin position="36"/>
        <end position="56"/>
    </location>
</feature>
<feature type="transmembrane region" description="Helical" evidence="2">
    <location>
        <begin position="95"/>
        <end position="115"/>
    </location>
</feature>
<feature type="transmembrane region" description="Helical" evidence="2">
    <location>
        <begin position="131"/>
        <end position="151"/>
    </location>
</feature>
<feature type="sequence conflict" description="In Ref. 2; ABD47087." evidence="3" ref="2">
    <original>P</original>
    <variation>A</variation>
    <location>
        <position position="66"/>
    </location>
</feature>